<feature type="transit peptide" description="Chloroplast" evidence="1">
    <location>
        <begin position="1"/>
        <end position="78"/>
    </location>
</feature>
<feature type="chain" id="PRO_0000456463" description="Chloroplast protein FOR GROWTH AND FERTILITY 2">
    <location>
        <begin position="79"/>
        <end position="372"/>
    </location>
</feature>
<feature type="transmembrane region" description="Helical" evidence="1">
    <location>
        <begin position="109"/>
        <end position="129"/>
    </location>
</feature>
<feature type="transmembrane region" description="Helical" evidence="1">
    <location>
        <begin position="161"/>
        <end position="181"/>
    </location>
</feature>
<feature type="transmembrane region" description="Helical" evidence="1">
    <location>
        <begin position="195"/>
        <end position="215"/>
    </location>
</feature>
<feature type="transmembrane region" description="Helical" evidence="1">
    <location>
        <begin position="231"/>
        <end position="251"/>
    </location>
</feature>
<feature type="transmembrane region" description="Helical" evidence="1">
    <location>
        <begin position="281"/>
        <end position="301"/>
    </location>
</feature>
<feature type="transmembrane region" description="Helical" evidence="1">
    <location>
        <begin position="309"/>
        <end position="329"/>
    </location>
</feature>
<feature type="transmembrane region" description="Helical" evidence="1">
    <location>
        <begin position="352"/>
        <end position="372"/>
    </location>
</feature>
<feature type="region of interest" description="Disordered" evidence="2">
    <location>
        <begin position="1"/>
        <end position="20"/>
    </location>
</feature>
<feature type="compositionally biased region" description="Polar residues" evidence="2">
    <location>
        <begin position="7"/>
        <end position="20"/>
    </location>
</feature>
<feature type="sequence conflict" description="In Ref. 4; AAM64382." evidence="5" ref="4">
    <original>F</original>
    <variation>T</variation>
    <location>
        <position position="18"/>
    </location>
</feature>
<feature type="sequence conflict" description="In Ref. 4; AAM64382." evidence="5" ref="4">
    <original>TNLS</original>
    <variation>PNLT</variation>
    <location>
        <begin position="33"/>
        <end position="36"/>
    </location>
</feature>
<feature type="sequence conflict" description="In Ref. 4; AAM64382." evidence="5" ref="4">
    <original>QNPS</original>
    <variation>HNPL</variation>
    <location>
        <begin position="58"/>
        <end position="61"/>
    </location>
</feature>
<feature type="sequence conflict" description="In Ref. 3; AAL06469/AAM26665." evidence="5" ref="3">
    <original>S</original>
    <variation>P</variation>
    <location>
        <position position="105"/>
    </location>
</feature>
<name>CGF2_ARATH</name>
<sequence>MDRLLQPPSSHSIAPSKFQSRPSPLLLHRLHSTNLSTFPSSRRLESRRISSISCFFRQNPSPDTSPGLNQSSNFLIASSQTDASKPNPGFIQRIVSSFEQRKTISAGMVILVSAIAALLLNPILVPPAFASFQTATNSGGAAVVGGKLLRTEVLTSAWTGFFAGCLHTLSGPDHLAALAPLSIGRTRMESAAVGALWGCGHDAGQLIFGLLFLLLKDRLHIEVIRTWGTRVVGLTLLVIGAMGIKEASEMPEPCVVTLENGETDEKSLKKKKIGFATFATGIVHGLQPDALMMVLPALALPSRIAGASFLIMFLIGTVIAMGSYTVFIGSCSEALKEKVPRITEKLTWASSLVAIGLGLAIIVSQFFGFSLY</sequence>
<gene>
    <name evidence="4" type="primary">CGF2</name>
    <name evidence="6" type="ordered locus">At2g16800</name>
    <name evidence="7" type="ORF">T24I21.21</name>
</gene>
<proteinExistence type="evidence at transcript level"/>
<comment type="function">
    <text evidence="3">Together with CGF1, essential protein which supports female gametogenesis and embryogenesis, probably by securing local energy supply.</text>
</comment>
<comment type="subcellular location">
    <subcellularLocation>
        <location evidence="3">Plastid</location>
        <location evidence="3">Chloroplast membrane</location>
        <topology evidence="1">Multi-pass membrane protein</topology>
    </subcellularLocation>
    <subcellularLocation>
        <location evidence="3">Plastid membrane</location>
        <topology evidence="1">Multi-pass membrane protein</topology>
    </subcellularLocation>
    <text evidence="3">Present in chloroplasts on green tissues as well as in plastids of roots and seeds.</text>
</comment>
<comment type="tissue specificity">
    <text evidence="3">Mostly expressed in leaves, stems and flowers, to a lower extent, in roots, floral bud, inflorescence and siliques, and, barely, in seedlings.</text>
</comment>
<comment type="developmental stage">
    <text evidence="3">In flowers, strongly expressed in mature pollen and ovules.</text>
</comment>
<comment type="disruption phenotype">
    <text evidence="3">Various vegetative defects, including reduced leaf size, dwarfism, and abnormal cell death (PubMed:32306898). Plants lacking both CGF1 and CGF2 are impaired for female gametogenesis and embryogenesis, and have abnormal leaf morphology with yellow patches associated with an altered chloroplast integrity; this phenotype is rescued by sucrose treatment (PubMed:32306898).</text>
</comment>
<dbReference type="EMBL" id="AC005825">
    <property type="protein sequence ID" value="AAD24613.1"/>
    <property type="molecule type" value="Genomic_DNA"/>
</dbReference>
<dbReference type="EMBL" id="CP002685">
    <property type="protein sequence ID" value="AEC06540.1"/>
    <property type="molecule type" value="Genomic_DNA"/>
</dbReference>
<dbReference type="EMBL" id="AF411779">
    <property type="protein sequence ID" value="AAL06469.1"/>
    <property type="molecule type" value="mRNA"/>
</dbReference>
<dbReference type="EMBL" id="AY101544">
    <property type="protein sequence ID" value="AAM26665.1"/>
    <property type="molecule type" value="mRNA"/>
</dbReference>
<dbReference type="EMBL" id="AY086310">
    <property type="protein sequence ID" value="AAM64382.1"/>
    <property type="molecule type" value="mRNA"/>
</dbReference>
<dbReference type="PIR" id="D84544">
    <property type="entry name" value="D84544"/>
</dbReference>
<dbReference type="RefSeq" id="NP_565394.1">
    <property type="nucleotide sequence ID" value="NM_127232.4"/>
</dbReference>
<dbReference type="FunCoup" id="Q9SLD9">
    <property type="interactions" value="560"/>
</dbReference>
<dbReference type="IntAct" id="Q9SLD9">
    <property type="interactions" value="5"/>
</dbReference>
<dbReference type="STRING" id="3702.Q9SLD9"/>
<dbReference type="PaxDb" id="3702-AT2G16800.1"/>
<dbReference type="ProteomicsDB" id="189968"/>
<dbReference type="EnsemblPlants" id="AT2G16800.1">
    <property type="protein sequence ID" value="AT2G16800.1"/>
    <property type="gene ID" value="AT2G16800"/>
</dbReference>
<dbReference type="GeneID" id="816181"/>
<dbReference type="Gramene" id="AT2G16800.1">
    <property type="protein sequence ID" value="AT2G16800.1"/>
    <property type="gene ID" value="AT2G16800"/>
</dbReference>
<dbReference type="KEGG" id="ath:AT2G16800"/>
<dbReference type="Araport" id="AT2G16800"/>
<dbReference type="TAIR" id="AT2G16800"/>
<dbReference type="eggNOG" id="ENOG502QUR7">
    <property type="taxonomic scope" value="Eukaryota"/>
</dbReference>
<dbReference type="HOGENOM" id="CLU_053247_0_0_1"/>
<dbReference type="InParanoid" id="Q9SLD9"/>
<dbReference type="OMA" id="HSAYASM"/>
<dbReference type="PRO" id="PR:Q9SLD9"/>
<dbReference type="Proteomes" id="UP000006548">
    <property type="component" value="Chromosome 2"/>
</dbReference>
<dbReference type="ExpressionAtlas" id="Q9SLD9">
    <property type="expression patterns" value="baseline and differential"/>
</dbReference>
<dbReference type="GO" id="GO:0009507">
    <property type="term" value="C:chloroplast"/>
    <property type="evidence" value="ECO:0000314"/>
    <property type="project" value="TAIR"/>
</dbReference>
<dbReference type="GO" id="GO:0031969">
    <property type="term" value="C:chloroplast membrane"/>
    <property type="evidence" value="ECO:0007669"/>
    <property type="project" value="UniProtKB-SubCell"/>
</dbReference>
<dbReference type="GO" id="GO:0009536">
    <property type="term" value="C:plastid"/>
    <property type="evidence" value="ECO:0000314"/>
    <property type="project" value="UniProtKB"/>
</dbReference>
<dbReference type="GO" id="GO:0009658">
    <property type="term" value="P:chloroplast organization"/>
    <property type="evidence" value="ECO:0000315"/>
    <property type="project" value="UniProtKB"/>
</dbReference>
<dbReference type="GO" id="GO:0048366">
    <property type="term" value="P:leaf development"/>
    <property type="evidence" value="ECO:0000315"/>
    <property type="project" value="UniProtKB"/>
</dbReference>
<dbReference type="GO" id="GO:0048481">
    <property type="term" value="P:plant ovule development"/>
    <property type="evidence" value="ECO:0000315"/>
    <property type="project" value="UniProtKB"/>
</dbReference>
<dbReference type="InterPro" id="IPR052776">
    <property type="entry name" value="Chloro_ReproSupport/MetalTrans"/>
</dbReference>
<dbReference type="InterPro" id="IPR039447">
    <property type="entry name" value="UreH-like_TM_dom"/>
</dbReference>
<dbReference type="PANTHER" id="PTHR33876:SF4">
    <property type="entry name" value="CHLOROPLAST PROTEIN FOR GROWTH AND FERTILITY 2"/>
    <property type="match status" value="1"/>
</dbReference>
<dbReference type="PANTHER" id="PTHR33876">
    <property type="entry name" value="UNNAMED PRODUCT"/>
    <property type="match status" value="1"/>
</dbReference>
<dbReference type="Pfam" id="PF13386">
    <property type="entry name" value="DsbD_2"/>
    <property type="match status" value="1"/>
</dbReference>
<reference key="1">
    <citation type="journal article" date="1999" name="Nature">
        <title>Sequence and analysis of chromosome 2 of the plant Arabidopsis thaliana.</title>
        <authorList>
            <person name="Lin X."/>
            <person name="Kaul S."/>
            <person name="Rounsley S.D."/>
            <person name="Shea T.P."/>
            <person name="Benito M.-I."/>
            <person name="Town C.D."/>
            <person name="Fujii C.Y."/>
            <person name="Mason T.M."/>
            <person name="Bowman C.L."/>
            <person name="Barnstead M.E."/>
            <person name="Feldblyum T.V."/>
            <person name="Buell C.R."/>
            <person name="Ketchum K.A."/>
            <person name="Lee J.J."/>
            <person name="Ronning C.M."/>
            <person name="Koo H.L."/>
            <person name="Moffat K.S."/>
            <person name="Cronin L.A."/>
            <person name="Shen M."/>
            <person name="Pai G."/>
            <person name="Van Aken S."/>
            <person name="Umayam L."/>
            <person name="Tallon L.J."/>
            <person name="Gill J.E."/>
            <person name="Adams M.D."/>
            <person name="Carrera A.J."/>
            <person name="Creasy T.H."/>
            <person name="Goodman H.M."/>
            <person name="Somerville C.R."/>
            <person name="Copenhaver G.P."/>
            <person name="Preuss D."/>
            <person name="Nierman W.C."/>
            <person name="White O."/>
            <person name="Eisen J.A."/>
            <person name="Salzberg S.L."/>
            <person name="Fraser C.M."/>
            <person name="Venter J.C."/>
        </authorList>
    </citation>
    <scope>NUCLEOTIDE SEQUENCE [LARGE SCALE GENOMIC DNA]</scope>
    <source>
        <strain>cv. Columbia</strain>
    </source>
</reference>
<reference key="2">
    <citation type="journal article" date="2017" name="Plant J.">
        <title>Araport11: a complete reannotation of the Arabidopsis thaliana reference genome.</title>
        <authorList>
            <person name="Cheng C.Y."/>
            <person name="Krishnakumar V."/>
            <person name="Chan A.P."/>
            <person name="Thibaud-Nissen F."/>
            <person name="Schobel S."/>
            <person name="Town C.D."/>
        </authorList>
    </citation>
    <scope>GENOME REANNOTATION</scope>
    <source>
        <strain>cv. Columbia</strain>
    </source>
</reference>
<reference key="3">
    <citation type="journal article" date="2003" name="Science">
        <title>Empirical analysis of transcriptional activity in the Arabidopsis genome.</title>
        <authorList>
            <person name="Yamada K."/>
            <person name="Lim J."/>
            <person name="Dale J.M."/>
            <person name="Chen H."/>
            <person name="Shinn P."/>
            <person name="Palm C.J."/>
            <person name="Southwick A.M."/>
            <person name="Wu H.C."/>
            <person name="Kim C.J."/>
            <person name="Nguyen M."/>
            <person name="Pham P.K."/>
            <person name="Cheuk R.F."/>
            <person name="Karlin-Newmann G."/>
            <person name="Liu S.X."/>
            <person name="Lam B."/>
            <person name="Sakano H."/>
            <person name="Wu T."/>
            <person name="Yu G."/>
            <person name="Miranda M."/>
            <person name="Quach H.L."/>
            <person name="Tripp M."/>
            <person name="Chang C.H."/>
            <person name="Lee J.M."/>
            <person name="Toriumi M.J."/>
            <person name="Chan M.M."/>
            <person name="Tang C.C."/>
            <person name="Onodera C.S."/>
            <person name="Deng J.M."/>
            <person name="Akiyama K."/>
            <person name="Ansari Y."/>
            <person name="Arakawa T."/>
            <person name="Banh J."/>
            <person name="Banno F."/>
            <person name="Bowser L."/>
            <person name="Brooks S.Y."/>
            <person name="Carninci P."/>
            <person name="Chao Q."/>
            <person name="Choy N."/>
            <person name="Enju A."/>
            <person name="Goldsmith A.D."/>
            <person name="Gurjal M."/>
            <person name="Hansen N.F."/>
            <person name="Hayashizaki Y."/>
            <person name="Johnson-Hopson C."/>
            <person name="Hsuan V.W."/>
            <person name="Iida K."/>
            <person name="Karnes M."/>
            <person name="Khan S."/>
            <person name="Koesema E."/>
            <person name="Ishida J."/>
            <person name="Jiang P.X."/>
            <person name="Jones T."/>
            <person name="Kawai J."/>
            <person name="Kamiya A."/>
            <person name="Meyers C."/>
            <person name="Nakajima M."/>
            <person name="Narusaka M."/>
            <person name="Seki M."/>
            <person name="Sakurai T."/>
            <person name="Satou M."/>
            <person name="Tamse R."/>
            <person name="Vaysberg M."/>
            <person name="Wallender E.K."/>
            <person name="Wong C."/>
            <person name="Yamamura Y."/>
            <person name="Yuan S."/>
            <person name="Shinozaki K."/>
            <person name="Davis R.W."/>
            <person name="Theologis A."/>
            <person name="Ecker J.R."/>
        </authorList>
    </citation>
    <scope>NUCLEOTIDE SEQUENCE [LARGE SCALE MRNA]</scope>
    <source>
        <strain>cv. Columbia</strain>
    </source>
</reference>
<reference key="4">
    <citation type="submission" date="2002-03" db="EMBL/GenBank/DDBJ databases">
        <title>Full-length cDNA from Arabidopsis thaliana.</title>
        <authorList>
            <person name="Brover V.V."/>
            <person name="Troukhan M.E."/>
            <person name="Alexandrov N.A."/>
            <person name="Lu Y.-P."/>
            <person name="Flavell R.B."/>
            <person name="Feldmann K.A."/>
        </authorList>
    </citation>
    <scope>NUCLEOTIDE SEQUENCE [LARGE SCALE MRNA]</scope>
</reference>
<reference key="5">
    <citation type="journal article" date="2020" name="BMC Plant Biol.">
        <title>Arabidopsis Chloroplast protein for Growth and Fertility1 (CGF1) and CGF2 are essential for chloroplast development and female gametogenesis.</title>
        <authorList>
            <person name="Zhu R.-M."/>
            <person name="Chai S."/>
            <person name="Zhang Z.-Z."/>
            <person name="Ma C.-L."/>
            <person name="Zhang Y."/>
            <person name="Li S."/>
        </authorList>
    </citation>
    <scope>FUNCTION</scope>
    <scope>DISRUPTION PHENOTYPE</scope>
    <scope>TISSUE SPECIFICITY</scope>
    <scope>DEVELOPMENTAL STAGE</scope>
    <scope>SUBCELLULAR LOCATION</scope>
    <source>
        <strain>cv. Columbia</strain>
    </source>
</reference>
<evidence type="ECO:0000255" key="1"/>
<evidence type="ECO:0000256" key="2">
    <source>
        <dbReference type="SAM" id="MobiDB-lite"/>
    </source>
</evidence>
<evidence type="ECO:0000269" key="3">
    <source>
    </source>
</evidence>
<evidence type="ECO:0000303" key="4">
    <source>
    </source>
</evidence>
<evidence type="ECO:0000305" key="5"/>
<evidence type="ECO:0000312" key="6">
    <source>
        <dbReference type="Araport" id="AT2G16800"/>
    </source>
</evidence>
<evidence type="ECO:0000312" key="7">
    <source>
        <dbReference type="EMBL" id="AEC06540.1"/>
    </source>
</evidence>
<protein>
    <recommendedName>
        <fullName evidence="4">Chloroplast protein FOR GROWTH AND FERTILITY 2</fullName>
    </recommendedName>
</protein>
<keyword id="KW-0150">Chloroplast</keyword>
<keyword id="KW-0472">Membrane</keyword>
<keyword id="KW-0934">Plastid</keyword>
<keyword id="KW-1185">Reference proteome</keyword>
<keyword id="KW-0809">Transit peptide</keyword>
<keyword id="KW-0812">Transmembrane</keyword>
<keyword id="KW-1133">Transmembrane helix</keyword>
<organism>
    <name type="scientific">Arabidopsis thaliana</name>
    <name type="common">Mouse-ear cress</name>
    <dbReference type="NCBI Taxonomy" id="3702"/>
    <lineage>
        <taxon>Eukaryota</taxon>
        <taxon>Viridiplantae</taxon>
        <taxon>Streptophyta</taxon>
        <taxon>Embryophyta</taxon>
        <taxon>Tracheophyta</taxon>
        <taxon>Spermatophyta</taxon>
        <taxon>Magnoliopsida</taxon>
        <taxon>eudicotyledons</taxon>
        <taxon>Gunneridae</taxon>
        <taxon>Pentapetalae</taxon>
        <taxon>rosids</taxon>
        <taxon>malvids</taxon>
        <taxon>Brassicales</taxon>
        <taxon>Brassicaceae</taxon>
        <taxon>Camelineae</taxon>
        <taxon>Arabidopsis</taxon>
    </lineage>
</organism>
<accession>Q9SLD9</accession>
<accession>Q8LCZ2</accession>
<accession>Q945Q4</accession>